<evidence type="ECO:0000255" key="1">
    <source>
        <dbReference type="HAMAP-Rule" id="MF_00028"/>
    </source>
</evidence>
<reference key="1">
    <citation type="submission" date="2008-04" db="EMBL/GenBank/DDBJ databases">
        <title>Complete sequence of chromosome of Methylobacterium populi BJ001.</title>
        <authorList>
            <consortium name="US DOE Joint Genome Institute"/>
            <person name="Copeland A."/>
            <person name="Lucas S."/>
            <person name="Lapidus A."/>
            <person name="Glavina del Rio T."/>
            <person name="Dalin E."/>
            <person name="Tice H."/>
            <person name="Bruce D."/>
            <person name="Goodwin L."/>
            <person name="Pitluck S."/>
            <person name="Chertkov O."/>
            <person name="Brettin T."/>
            <person name="Detter J.C."/>
            <person name="Han C."/>
            <person name="Kuske C.R."/>
            <person name="Schmutz J."/>
            <person name="Larimer F."/>
            <person name="Land M."/>
            <person name="Hauser L."/>
            <person name="Kyrpides N."/>
            <person name="Mikhailova N."/>
            <person name="Marx C."/>
            <person name="Richardson P."/>
        </authorList>
    </citation>
    <scope>NUCLEOTIDE SEQUENCE [LARGE SCALE GENOMIC DNA]</scope>
    <source>
        <strain>ATCC BAA-705 / NCIMB 13946 / BJ001</strain>
    </source>
</reference>
<proteinExistence type="inferred from homology"/>
<sequence>MTRALMIQGTGSDVGKSLLVAGLARAFTRRGLRVRPFKPQNMSNNAAVTADGGEIGRAQALQARAARVAPSVHMNPVLLKPQSEVGAQVVVQGRMIGTARARDYQAWKPRLMESVLDSFERLRADSDLVLVEGAGSPAEVNLRRGDIANMGFARATDTPVVIVGDIDRGGVIASLVGTQAVMEPDDAAMIRGFIVNRFRGDPTLFADGMALIAERTGWTPFGLVPFFPEAGRLPPEDAVALDVAGAGRDGSVPLIAVLRFPHIANFDDLDPLRQEPGVSVAFVPAGEPIPAEADLIVLPGSKTTIDDLDFLRAQGWDIDIRAHLRRGRRVLGLCGGYQMLGRAIADPQGIEGAPRALPGLGLLDVETVMTAEKRLVAVTGTTLADDEPFSGYEMHVGDTTGPDAAHPLLRFADGRADGAVSADGLVAGTYVHGLFANDRQRAAWLARLGAAPGLTNYEAGIEAVLDRFADHLEAHLDCDGLLRLCRPL</sequence>
<dbReference type="EMBL" id="CP001029">
    <property type="protein sequence ID" value="ACB83356.1"/>
    <property type="molecule type" value="Genomic_DNA"/>
</dbReference>
<dbReference type="RefSeq" id="WP_012456952.1">
    <property type="nucleotide sequence ID" value="NC_010725.1"/>
</dbReference>
<dbReference type="SMR" id="B1Z9X0"/>
<dbReference type="STRING" id="441620.Mpop_5262"/>
<dbReference type="KEGG" id="mpo:Mpop_5262"/>
<dbReference type="eggNOG" id="COG1492">
    <property type="taxonomic scope" value="Bacteria"/>
</dbReference>
<dbReference type="HOGENOM" id="CLU_019250_2_0_5"/>
<dbReference type="OrthoDB" id="9808302at2"/>
<dbReference type="UniPathway" id="UPA00148"/>
<dbReference type="Proteomes" id="UP000007136">
    <property type="component" value="Chromosome"/>
</dbReference>
<dbReference type="GO" id="GO:0015420">
    <property type="term" value="F:ABC-type vitamin B12 transporter activity"/>
    <property type="evidence" value="ECO:0007669"/>
    <property type="project" value="UniProtKB-UniRule"/>
</dbReference>
<dbReference type="GO" id="GO:0003824">
    <property type="term" value="F:catalytic activity"/>
    <property type="evidence" value="ECO:0007669"/>
    <property type="project" value="InterPro"/>
</dbReference>
<dbReference type="GO" id="GO:0009236">
    <property type="term" value="P:cobalamin biosynthetic process"/>
    <property type="evidence" value="ECO:0007669"/>
    <property type="project" value="UniProtKB-UniRule"/>
</dbReference>
<dbReference type="CDD" id="cd01750">
    <property type="entry name" value="GATase1_CobQ"/>
    <property type="match status" value="1"/>
</dbReference>
<dbReference type="Gene3D" id="3.40.50.880">
    <property type="match status" value="1"/>
</dbReference>
<dbReference type="Gene3D" id="3.40.50.300">
    <property type="entry name" value="P-loop containing nucleotide triphosphate hydrolases"/>
    <property type="match status" value="1"/>
</dbReference>
<dbReference type="HAMAP" id="MF_00028">
    <property type="entry name" value="CobQ"/>
    <property type="match status" value="1"/>
</dbReference>
<dbReference type="InterPro" id="IPR029062">
    <property type="entry name" value="Class_I_gatase-like"/>
</dbReference>
<dbReference type="InterPro" id="IPR002586">
    <property type="entry name" value="CobQ/CobB/MinD/ParA_Nub-bd_dom"/>
</dbReference>
<dbReference type="InterPro" id="IPR033949">
    <property type="entry name" value="CobQ_GATase1"/>
</dbReference>
<dbReference type="InterPro" id="IPR004459">
    <property type="entry name" value="CobQ_synth"/>
</dbReference>
<dbReference type="InterPro" id="IPR011698">
    <property type="entry name" value="GATase_3"/>
</dbReference>
<dbReference type="InterPro" id="IPR027417">
    <property type="entry name" value="P-loop_NTPase"/>
</dbReference>
<dbReference type="NCBIfam" id="TIGR00313">
    <property type="entry name" value="cobQ"/>
    <property type="match status" value="1"/>
</dbReference>
<dbReference type="NCBIfam" id="NF001989">
    <property type="entry name" value="PRK00784.1"/>
    <property type="match status" value="1"/>
</dbReference>
<dbReference type="PANTHER" id="PTHR21343:SF1">
    <property type="entry name" value="COBYRIC ACID SYNTHASE"/>
    <property type="match status" value="1"/>
</dbReference>
<dbReference type="PANTHER" id="PTHR21343">
    <property type="entry name" value="DETHIOBIOTIN SYNTHETASE"/>
    <property type="match status" value="1"/>
</dbReference>
<dbReference type="Pfam" id="PF01656">
    <property type="entry name" value="CbiA"/>
    <property type="match status" value="1"/>
</dbReference>
<dbReference type="Pfam" id="PF07685">
    <property type="entry name" value="GATase_3"/>
    <property type="match status" value="1"/>
</dbReference>
<dbReference type="SUPFAM" id="SSF52317">
    <property type="entry name" value="Class I glutamine amidotransferase-like"/>
    <property type="match status" value="1"/>
</dbReference>
<dbReference type="SUPFAM" id="SSF52540">
    <property type="entry name" value="P-loop containing nucleoside triphosphate hydrolases"/>
    <property type="match status" value="1"/>
</dbReference>
<dbReference type="PROSITE" id="PS51274">
    <property type="entry name" value="GATASE_COBBQ"/>
    <property type="match status" value="1"/>
</dbReference>
<gene>
    <name evidence="1" type="primary">cobQ</name>
    <name type="ordered locus">Mpop_5262</name>
</gene>
<name>COBQ_METPB</name>
<comment type="function">
    <text evidence="1">Catalyzes amidations at positions B, D, E, and G on adenosylcobyrinic A,C-diamide. NH(2) groups are provided by glutamine, and one molecule of ATP is hydrogenolyzed for each amidation.</text>
</comment>
<comment type="pathway">
    <text evidence="1">Cofactor biosynthesis; adenosylcobalamin biosynthesis.</text>
</comment>
<comment type="similarity">
    <text evidence="1">Belongs to the CobB/CobQ family. CobQ subfamily.</text>
</comment>
<organism>
    <name type="scientific">Methylorubrum populi (strain ATCC BAA-705 / NCIMB 13946 / BJ001)</name>
    <name type="common">Methylobacterium populi</name>
    <dbReference type="NCBI Taxonomy" id="441620"/>
    <lineage>
        <taxon>Bacteria</taxon>
        <taxon>Pseudomonadati</taxon>
        <taxon>Pseudomonadota</taxon>
        <taxon>Alphaproteobacteria</taxon>
        <taxon>Hyphomicrobiales</taxon>
        <taxon>Methylobacteriaceae</taxon>
        <taxon>Methylorubrum</taxon>
    </lineage>
</organism>
<accession>B1Z9X0</accession>
<feature type="chain" id="PRO_1000090234" description="Cobyric acid synthase">
    <location>
        <begin position="1"/>
        <end position="488"/>
    </location>
</feature>
<feature type="domain" description="GATase cobBQ-type" evidence="1">
    <location>
        <begin position="252"/>
        <end position="440"/>
    </location>
</feature>
<feature type="active site" description="Nucleophile" evidence="1">
    <location>
        <position position="334"/>
    </location>
</feature>
<feature type="active site" evidence="1">
    <location>
        <position position="432"/>
    </location>
</feature>
<protein>
    <recommendedName>
        <fullName evidence="1">Cobyric acid synthase</fullName>
    </recommendedName>
</protein>
<keyword id="KW-0169">Cobalamin biosynthesis</keyword>
<keyword id="KW-0315">Glutamine amidotransferase</keyword>